<comment type="subcellular location">
    <subcellularLocation>
        <location evidence="1">Secreted</location>
    </subcellularLocation>
</comment>
<comment type="similarity">
    <text evidence="3">Belongs to the DEFL family.</text>
</comment>
<comment type="caution">
    <text evidence="3">Lacks 1 of the 4 disulfide bonds, which are conserved features of the family.</text>
</comment>
<accession>Q2V3S8</accession>
<sequence>MMNVSLKLSFLVFILVIMSNLGSEARELAGVNEIFEIAARSSNNAGTARALQQAPPCKRDVDCSFECPKGGFCNDRLGTCDCF</sequence>
<proteinExistence type="inferred from homology"/>
<name>DF257_ARATH</name>
<keyword id="KW-0929">Antimicrobial</keyword>
<keyword id="KW-1015">Disulfide bond</keyword>
<keyword id="KW-0295">Fungicide</keyword>
<keyword id="KW-0611">Plant defense</keyword>
<keyword id="KW-1185">Reference proteome</keyword>
<keyword id="KW-0964">Secreted</keyword>
<keyword id="KW-0732">Signal</keyword>
<evidence type="ECO:0000250" key="1"/>
<evidence type="ECO:0000255" key="2"/>
<evidence type="ECO:0000305" key="3"/>
<organism>
    <name type="scientific">Arabidopsis thaliana</name>
    <name type="common">Mouse-ear cress</name>
    <dbReference type="NCBI Taxonomy" id="3702"/>
    <lineage>
        <taxon>Eukaryota</taxon>
        <taxon>Viridiplantae</taxon>
        <taxon>Streptophyta</taxon>
        <taxon>Embryophyta</taxon>
        <taxon>Tracheophyta</taxon>
        <taxon>Spermatophyta</taxon>
        <taxon>Magnoliopsida</taxon>
        <taxon>eudicotyledons</taxon>
        <taxon>Gunneridae</taxon>
        <taxon>Pentapetalae</taxon>
        <taxon>rosids</taxon>
        <taxon>malvids</taxon>
        <taxon>Brassicales</taxon>
        <taxon>Brassicaceae</taxon>
        <taxon>Camelineae</taxon>
        <taxon>Arabidopsis</taxon>
    </lineage>
</organism>
<gene>
    <name type="ordered locus">At3g24508</name>
    <name type="ORF">MOB24</name>
</gene>
<feature type="signal peptide" evidence="2">
    <location>
        <begin position="1"/>
        <end position="25"/>
    </location>
</feature>
<feature type="chain" id="PRO_0000379720" description="Putative defensin-like protein 257">
    <location>
        <begin position="26"/>
        <end position="83"/>
    </location>
</feature>
<feature type="disulfide bond" evidence="1">
    <location>
        <begin position="57"/>
        <end position="73"/>
    </location>
</feature>
<feature type="disulfide bond" evidence="1">
    <location>
        <begin position="63"/>
        <end position="80"/>
    </location>
</feature>
<feature type="disulfide bond" evidence="1">
    <location>
        <begin position="67"/>
        <end position="82"/>
    </location>
</feature>
<reference key="1">
    <citation type="journal article" date="2000" name="DNA Res.">
        <title>Structural analysis of Arabidopsis thaliana chromosome 3. II. Sequence features of the 4,251,695 bp regions covered by 90 P1, TAC and BAC clones.</title>
        <authorList>
            <person name="Kaneko T."/>
            <person name="Katoh T."/>
            <person name="Sato S."/>
            <person name="Nakamura Y."/>
            <person name="Asamizu E."/>
            <person name="Tabata S."/>
        </authorList>
    </citation>
    <scope>NUCLEOTIDE SEQUENCE [LARGE SCALE GENOMIC DNA]</scope>
    <source>
        <strain>cv. Columbia</strain>
    </source>
</reference>
<reference key="2">
    <citation type="journal article" date="2017" name="Plant J.">
        <title>Araport11: a complete reannotation of the Arabidopsis thaliana reference genome.</title>
        <authorList>
            <person name="Cheng C.Y."/>
            <person name="Krishnakumar V."/>
            <person name="Chan A.P."/>
            <person name="Thibaud-Nissen F."/>
            <person name="Schobel S."/>
            <person name="Town C.D."/>
        </authorList>
    </citation>
    <scope>GENOME REANNOTATION</scope>
    <source>
        <strain>cv. Columbia</strain>
    </source>
</reference>
<reference key="3">
    <citation type="journal article" date="2005" name="Plant Physiol.">
        <title>Genome organization of more than 300 defensin-like genes in Arabidopsis.</title>
        <authorList>
            <person name="Silverstein K.A.T."/>
            <person name="Graham M.A."/>
            <person name="Paape T.D."/>
            <person name="VandenBosch K.A."/>
        </authorList>
    </citation>
    <scope>GENE FAMILY</scope>
</reference>
<protein>
    <recommendedName>
        <fullName>Putative defensin-like protein 257</fullName>
    </recommendedName>
</protein>
<dbReference type="EMBL" id="AB020746">
    <property type="status" value="NOT_ANNOTATED_CDS"/>
    <property type="molecule type" value="Genomic_DNA"/>
</dbReference>
<dbReference type="EMBL" id="CP002686">
    <property type="protein sequence ID" value="AEE76909.1"/>
    <property type="molecule type" value="Genomic_DNA"/>
</dbReference>
<dbReference type="RefSeq" id="NP_001030759.1">
    <property type="nucleotide sequence ID" value="NM_001035682.2"/>
</dbReference>
<dbReference type="SMR" id="Q2V3S8"/>
<dbReference type="PaxDb" id="3702-AT3G24508.1"/>
<dbReference type="EnsemblPlants" id="AT3G24508.1">
    <property type="protein sequence ID" value="AT3G24508.1"/>
    <property type="gene ID" value="AT3G24508"/>
</dbReference>
<dbReference type="GeneID" id="3768919"/>
<dbReference type="Gramene" id="AT3G24508.1">
    <property type="protein sequence ID" value="AT3G24508.1"/>
    <property type="gene ID" value="AT3G24508"/>
</dbReference>
<dbReference type="KEGG" id="ath:AT3G24508"/>
<dbReference type="Araport" id="AT3G24508"/>
<dbReference type="TAIR" id="AT3G24508"/>
<dbReference type="HOGENOM" id="CLU_2530542_0_0_1"/>
<dbReference type="InParanoid" id="Q2V3S8"/>
<dbReference type="OMA" id="APPCKRD"/>
<dbReference type="PhylomeDB" id="Q2V3S8"/>
<dbReference type="PRO" id="PR:Q2V3S8"/>
<dbReference type="Proteomes" id="UP000006548">
    <property type="component" value="Chromosome 3"/>
</dbReference>
<dbReference type="ExpressionAtlas" id="Q2V3S8">
    <property type="expression patterns" value="baseline"/>
</dbReference>
<dbReference type="GO" id="GO:0005576">
    <property type="term" value="C:extracellular region"/>
    <property type="evidence" value="ECO:0007669"/>
    <property type="project" value="UniProtKB-SubCell"/>
</dbReference>
<dbReference type="GO" id="GO:0050832">
    <property type="term" value="P:defense response to fungus"/>
    <property type="evidence" value="ECO:0007669"/>
    <property type="project" value="UniProtKB-KW"/>
</dbReference>
<dbReference type="GO" id="GO:0031640">
    <property type="term" value="P:killing of cells of another organism"/>
    <property type="evidence" value="ECO:0007669"/>
    <property type="project" value="UniProtKB-KW"/>
</dbReference>